<keyword id="KW-0030">Aminoacyl-tRNA synthetase</keyword>
<keyword id="KW-0067">ATP-binding</keyword>
<keyword id="KW-0963">Cytoplasm</keyword>
<keyword id="KW-0436">Ligase</keyword>
<keyword id="KW-0547">Nucleotide-binding</keyword>
<keyword id="KW-0648">Protein biosynthesis</keyword>
<accession>Q2YUR2</accession>
<reference key="1">
    <citation type="journal article" date="2007" name="PLoS ONE">
        <title>Molecular correlates of host specialization in Staphylococcus aureus.</title>
        <authorList>
            <person name="Herron-Olson L."/>
            <person name="Fitzgerald J.R."/>
            <person name="Musser J.M."/>
            <person name="Kapur V."/>
        </authorList>
    </citation>
    <scope>NUCLEOTIDE SEQUENCE [LARGE SCALE GENOMIC DNA]</scope>
    <source>
        <strain>bovine RF122 / ET3-1</strain>
    </source>
</reference>
<name>SYS_STAAB</name>
<evidence type="ECO:0000255" key="1">
    <source>
        <dbReference type="HAMAP-Rule" id="MF_00176"/>
    </source>
</evidence>
<sequence>MLDIRLFRNEPDTVKSKIELRGDDPKVVDEILELDEQRRKLIIATEEMKARRNKVSEEIALKKRNKENDDDVIAEMRTLGDDIKEKDSQLNEIDNKMTGILCRIPNLISDDVPQGESDEDNVEVKKWGTPREFSFEPKAHWDIVEELKMADFDRAAKVSGARFVYLTNEGAQLERALMNYMITKHTTQHGYTEMMVPQLVNADTMYGTGQLPKFEEDLFKVEKEGLYTIPTAEVPLTNFYRNEIIQPGVLPEKFTGQSACFRSEAGSAGRDTRGLIRLHQFDKVEMVRFEQPEDSWNALEEMTTNAEAILEELGLPYRRVILCTGDIGFSASKTYDLEVWLPSYNDYKEISSCSNCMDFQARRANIRFKRDKAAKPELAHTLNGSGLAVGRTFAAIVENYQNEDGTVTIPEALVPFMGGKTQISKPVK</sequence>
<feature type="chain" id="PRO_1000019831" description="Serine--tRNA ligase">
    <location>
        <begin position="1"/>
        <end position="428"/>
    </location>
</feature>
<feature type="binding site" evidence="1">
    <location>
        <begin position="231"/>
        <end position="233"/>
    </location>
    <ligand>
        <name>L-serine</name>
        <dbReference type="ChEBI" id="CHEBI:33384"/>
    </ligand>
</feature>
<feature type="binding site" evidence="1">
    <location>
        <begin position="262"/>
        <end position="264"/>
    </location>
    <ligand>
        <name>ATP</name>
        <dbReference type="ChEBI" id="CHEBI:30616"/>
    </ligand>
</feature>
<feature type="binding site" evidence="1">
    <location>
        <position position="285"/>
    </location>
    <ligand>
        <name>L-serine</name>
        <dbReference type="ChEBI" id="CHEBI:33384"/>
    </ligand>
</feature>
<feature type="binding site" evidence="1">
    <location>
        <begin position="349"/>
        <end position="352"/>
    </location>
    <ligand>
        <name>ATP</name>
        <dbReference type="ChEBI" id="CHEBI:30616"/>
    </ligand>
</feature>
<feature type="binding site" evidence="1">
    <location>
        <position position="385"/>
    </location>
    <ligand>
        <name>L-serine</name>
        <dbReference type="ChEBI" id="CHEBI:33384"/>
    </ligand>
</feature>
<gene>
    <name evidence="1" type="primary">serS</name>
    <name type="ordered locus">SAB0009</name>
</gene>
<comment type="function">
    <text evidence="1">Catalyzes the attachment of serine to tRNA(Ser). Is also able to aminoacylate tRNA(Sec) with serine, to form the misacylated tRNA L-seryl-tRNA(Sec), which will be further converted into selenocysteinyl-tRNA(Sec).</text>
</comment>
<comment type="catalytic activity">
    <reaction evidence="1">
        <text>tRNA(Ser) + L-serine + ATP = L-seryl-tRNA(Ser) + AMP + diphosphate + H(+)</text>
        <dbReference type="Rhea" id="RHEA:12292"/>
        <dbReference type="Rhea" id="RHEA-COMP:9669"/>
        <dbReference type="Rhea" id="RHEA-COMP:9703"/>
        <dbReference type="ChEBI" id="CHEBI:15378"/>
        <dbReference type="ChEBI" id="CHEBI:30616"/>
        <dbReference type="ChEBI" id="CHEBI:33019"/>
        <dbReference type="ChEBI" id="CHEBI:33384"/>
        <dbReference type="ChEBI" id="CHEBI:78442"/>
        <dbReference type="ChEBI" id="CHEBI:78533"/>
        <dbReference type="ChEBI" id="CHEBI:456215"/>
        <dbReference type="EC" id="6.1.1.11"/>
    </reaction>
</comment>
<comment type="catalytic activity">
    <reaction evidence="1">
        <text>tRNA(Sec) + L-serine + ATP = L-seryl-tRNA(Sec) + AMP + diphosphate + H(+)</text>
        <dbReference type="Rhea" id="RHEA:42580"/>
        <dbReference type="Rhea" id="RHEA-COMP:9742"/>
        <dbReference type="Rhea" id="RHEA-COMP:10128"/>
        <dbReference type="ChEBI" id="CHEBI:15378"/>
        <dbReference type="ChEBI" id="CHEBI:30616"/>
        <dbReference type="ChEBI" id="CHEBI:33019"/>
        <dbReference type="ChEBI" id="CHEBI:33384"/>
        <dbReference type="ChEBI" id="CHEBI:78442"/>
        <dbReference type="ChEBI" id="CHEBI:78533"/>
        <dbReference type="ChEBI" id="CHEBI:456215"/>
        <dbReference type="EC" id="6.1.1.11"/>
    </reaction>
</comment>
<comment type="pathway">
    <text evidence="1">Aminoacyl-tRNA biosynthesis; selenocysteinyl-tRNA(Sec) biosynthesis; L-seryl-tRNA(Sec) from L-serine and tRNA(Sec): step 1/1.</text>
</comment>
<comment type="subunit">
    <text evidence="1">Homodimer. The tRNA molecule binds across the dimer.</text>
</comment>
<comment type="subcellular location">
    <subcellularLocation>
        <location evidence="1">Cytoplasm</location>
    </subcellularLocation>
</comment>
<comment type="domain">
    <text evidence="1">Consists of two distinct domains, a catalytic core and a N-terminal extension that is involved in tRNA binding.</text>
</comment>
<comment type="similarity">
    <text evidence="1">Belongs to the class-II aminoacyl-tRNA synthetase family. Type-1 seryl-tRNA synthetase subfamily.</text>
</comment>
<organism>
    <name type="scientific">Staphylococcus aureus (strain bovine RF122 / ET3-1)</name>
    <dbReference type="NCBI Taxonomy" id="273036"/>
    <lineage>
        <taxon>Bacteria</taxon>
        <taxon>Bacillati</taxon>
        <taxon>Bacillota</taxon>
        <taxon>Bacilli</taxon>
        <taxon>Bacillales</taxon>
        <taxon>Staphylococcaceae</taxon>
        <taxon>Staphylococcus</taxon>
    </lineage>
</organism>
<dbReference type="EC" id="6.1.1.11" evidence="1"/>
<dbReference type="EMBL" id="AJ938182">
    <property type="protein sequence ID" value="CAI79697.1"/>
    <property type="molecule type" value="Genomic_DNA"/>
</dbReference>
<dbReference type="RefSeq" id="WP_000884325.1">
    <property type="nucleotide sequence ID" value="NC_007622.1"/>
</dbReference>
<dbReference type="SMR" id="Q2YUR2"/>
<dbReference type="KEGG" id="sab:SAB0009"/>
<dbReference type="HOGENOM" id="CLU_023797_1_1_9"/>
<dbReference type="UniPathway" id="UPA00906">
    <property type="reaction ID" value="UER00895"/>
</dbReference>
<dbReference type="GO" id="GO:0005737">
    <property type="term" value="C:cytoplasm"/>
    <property type="evidence" value="ECO:0007669"/>
    <property type="project" value="UniProtKB-SubCell"/>
</dbReference>
<dbReference type="GO" id="GO:0005524">
    <property type="term" value="F:ATP binding"/>
    <property type="evidence" value="ECO:0007669"/>
    <property type="project" value="UniProtKB-UniRule"/>
</dbReference>
<dbReference type="GO" id="GO:0140096">
    <property type="term" value="F:catalytic activity, acting on a protein"/>
    <property type="evidence" value="ECO:0007669"/>
    <property type="project" value="UniProtKB-ARBA"/>
</dbReference>
<dbReference type="GO" id="GO:0004828">
    <property type="term" value="F:serine-tRNA ligase activity"/>
    <property type="evidence" value="ECO:0007669"/>
    <property type="project" value="UniProtKB-UniRule"/>
</dbReference>
<dbReference type="GO" id="GO:0016740">
    <property type="term" value="F:transferase activity"/>
    <property type="evidence" value="ECO:0007669"/>
    <property type="project" value="UniProtKB-ARBA"/>
</dbReference>
<dbReference type="GO" id="GO:0016260">
    <property type="term" value="P:selenocysteine biosynthetic process"/>
    <property type="evidence" value="ECO:0007669"/>
    <property type="project" value="UniProtKB-UniRule"/>
</dbReference>
<dbReference type="GO" id="GO:0006434">
    <property type="term" value="P:seryl-tRNA aminoacylation"/>
    <property type="evidence" value="ECO:0007669"/>
    <property type="project" value="UniProtKB-UniRule"/>
</dbReference>
<dbReference type="CDD" id="cd00770">
    <property type="entry name" value="SerRS_core"/>
    <property type="match status" value="1"/>
</dbReference>
<dbReference type="Gene3D" id="3.30.930.10">
    <property type="entry name" value="Bira Bifunctional Protein, Domain 2"/>
    <property type="match status" value="1"/>
</dbReference>
<dbReference type="Gene3D" id="1.10.287.40">
    <property type="entry name" value="Serine-tRNA synthetase, tRNA binding domain"/>
    <property type="match status" value="1"/>
</dbReference>
<dbReference type="HAMAP" id="MF_00176">
    <property type="entry name" value="Ser_tRNA_synth_type1"/>
    <property type="match status" value="1"/>
</dbReference>
<dbReference type="InterPro" id="IPR002314">
    <property type="entry name" value="aa-tRNA-synt_IIb"/>
</dbReference>
<dbReference type="InterPro" id="IPR006195">
    <property type="entry name" value="aa-tRNA-synth_II"/>
</dbReference>
<dbReference type="InterPro" id="IPR045864">
    <property type="entry name" value="aa-tRNA-synth_II/BPL/LPL"/>
</dbReference>
<dbReference type="InterPro" id="IPR002317">
    <property type="entry name" value="Ser-tRNA-ligase_type_1"/>
</dbReference>
<dbReference type="InterPro" id="IPR015866">
    <property type="entry name" value="Ser-tRNA-synth_1_N"/>
</dbReference>
<dbReference type="InterPro" id="IPR042103">
    <property type="entry name" value="SerRS_1_N_sf"/>
</dbReference>
<dbReference type="InterPro" id="IPR033729">
    <property type="entry name" value="SerRS_core"/>
</dbReference>
<dbReference type="InterPro" id="IPR010978">
    <property type="entry name" value="tRNA-bd_arm"/>
</dbReference>
<dbReference type="NCBIfam" id="TIGR00414">
    <property type="entry name" value="serS"/>
    <property type="match status" value="1"/>
</dbReference>
<dbReference type="PANTHER" id="PTHR43697:SF1">
    <property type="entry name" value="SERINE--TRNA LIGASE"/>
    <property type="match status" value="1"/>
</dbReference>
<dbReference type="PANTHER" id="PTHR43697">
    <property type="entry name" value="SERYL-TRNA SYNTHETASE"/>
    <property type="match status" value="1"/>
</dbReference>
<dbReference type="Pfam" id="PF02403">
    <property type="entry name" value="Seryl_tRNA_N"/>
    <property type="match status" value="1"/>
</dbReference>
<dbReference type="Pfam" id="PF00587">
    <property type="entry name" value="tRNA-synt_2b"/>
    <property type="match status" value="1"/>
</dbReference>
<dbReference type="PIRSF" id="PIRSF001529">
    <property type="entry name" value="Ser-tRNA-synth_IIa"/>
    <property type="match status" value="1"/>
</dbReference>
<dbReference type="PRINTS" id="PR00981">
    <property type="entry name" value="TRNASYNTHSER"/>
</dbReference>
<dbReference type="SUPFAM" id="SSF55681">
    <property type="entry name" value="Class II aaRS and biotin synthetases"/>
    <property type="match status" value="1"/>
</dbReference>
<dbReference type="SUPFAM" id="SSF46589">
    <property type="entry name" value="tRNA-binding arm"/>
    <property type="match status" value="1"/>
</dbReference>
<dbReference type="PROSITE" id="PS50862">
    <property type="entry name" value="AA_TRNA_LIGASE_II"/>
    <property type="match status" value="1"/>
</dbReference>
<protein>
    <recommendedName>
        <fullName evidence="1">Serine--tRNA ligase</fullName>
        <ecNumber evidence="1">6.1.1.11</ecNumber>
    </recommendedName>
    <alternativeName>
        <fullName evidence="1">Seryl-tRNA synthetase</fullName>
        <shortName evidence="1">SerRS</shortName>
    </alternativeName>
    <alternativeName>
        <fullName evidence="1">Seryl-tRNA(Ser/Sec) synthetase</fullName>
    </alternativeName>
</protein>
<proteinExistence type="inferred from homology"/>